<evidence type="ECO:0000250" key="1"/>
<evidence type="ECO:0000255" key="2">
    <source>
        <dbReference type="PROSITE-ProRule" id="PRU10014"/>
    </source>
</evidence>
<evidence type="ECO:0000256" key="3">
    <source>
        <dbReference type="SAM" id="MobiDB-lite"/>
    </source>
</evidence>
<evidence type="ECO:0000305" key="4"/>
<sequence>MSVQTSPSKQVTSGIQNLNMDSPAKKLDFGATDKENKPFDEDLAKLEAEIDAEHNANKKAAEAKKMAPTLKPEEANEPLLTENPQRFVLFPIKYHEIWQMYKKAEASFWTAEEIDLSKDLHDWNNRLNDDEKFFISHILAFFAASDGIVNENLVERFSGEVQIPEARCFYGFQIMMENIHSETYSLLIDTYIKEPSQRTYLFNAIDTIPCIRKKADWALRWITDKSSTFAQRLVAFAAVEGIFFSGAFASIFWLKKRGLMPGLTFSNELISRDEGLHTDFACLLFSHLNNRPSKQLIQEIIVDAVRIEQEFLTEALPCALLGMNADLMKQYIEFVADRLLVALGNEKIYRSTNPFDFMENISLGGKTNFFEKRVGDYQKAGVMNSTKKADADAEVAKNENGGDFTFDEDF</sequence>
<gene>
    <name type="primary">rnr-2</name>
    <name type="synonym">rnr2</name>
    <name type="ORF">NCU07887</name>
</gene>
<name>RIR2_NEUCR</name>
<comment type="function">
    <text>Provides the precursors necessary for DNA synthesis. Catalyzes the biosynthesis of deoxyribonucleotides from the corresponding ribonucleotides.</text>
</comment>
<comment type="catalytic activity">
    <reaction evidence="2">
        <text>a 2'-deoxyribonucleoside 5'-diphosphate + [thioredoxin]-disulfide + H2O = a ribonucleoside 5'-diphosphate + [thioredoxin]-dithiol</text>
        <dbReference type="Rhea" id="RHEA:23252"/>
        <dbReference type="Rhea" id="RHEA-COMP:10698"/>
        <dbReference type="Rhea" id="RHEA-COMP:10700"/>
        <dbReference type="ChEBI" id="CHEBI:15377"/>
        <dbReference type="ChEBI" id="CHEBI:29950"/>
        <dbReference type="ChEBI" id="CHEBI:50058"/>
        <dbReference type="ChEBI" id="CHEBI:57930"/>
        <dbReference type="ChEBI" id="CHEBI:73316"/>
        <dbReference type="EC" id="1.17.4.1"/>
    </reaction>
</comment>
<comment type="cofactor">
    <cofactor evidence="1">
        <name>Fe cation</name>
        <dbReference type="ChEBI" id="CHEBI:24875"/>
    </cofactor>
    <text evidence="1">Binds 2 iron ions per subunit.</text>
</comment>
<comment type="subunit">
    <text evidence="1">Heterodimer of a large and a small subunit.</text>
</comment>
<comment type="similarity">
    <text evidence="4">Belongs to the ribonucleoside diphosphate reductase small chain family.</text>
</comment>
<keyword id="KW-0215">Deoxyribonucleotide synthesis</keyword>
<keyword id="KW-0408">Iron</keyword>
<keyword id="KW-0479">Metal-binding</keyword>
<keyword id="KW-0560">Oxidoreductase</keyword>
<keyword id="KW-1185">Reference proteome</keyword>
<dbReference type="EC" id="1.17.4.1"/>
<dbReference type="EMBL" id="AY027867">
    <property type="protein sequence ID" value="AAK14804.2"/>
    <property type="molecule type" value="Genomic_DNA"/>
</dbReference>
<dbReference type="EMBL" id="CM002238">
    <property type="protein sequence ID" value="EAA33584.1"/>
    <property type="molecule type" value="Genomic_DNA"/>
</dbReference>
<dbReference type="RefSeq" id="XP_962820.1">
    <property type="nucleotide sequence ID" value="XM_957727.3"/>
</dbReference>
<dbReference type="SMR" id="Q9C167"/>
<dbReference type="FunCoup" id="Q9C167">
    <property type="interactions" value="1275"/>
</dbReference>
<dbReference type="STRING" id="367110.Q9C167"/>
<dbReference type="PaxDb" id="5141-EFNCRP00000007506"/>
<dbReference type="EnsemblFungi" id="EAA33584">
    <property type="protein sequence ID" value="EAA33584"/>
    <property type="gene ID" value="NCU07887"/>
</dbReference>
<dbReference type="GeneID" id="3878959"/>
<dbReference type="KEGG" id="ncr:NCU07887"/>
<dbReference type="VEuPathDB" id="FungiDB:NCU07887"/>
<dbReference type="HOGENOM" id="CLU_035339_2_1_1"/>
<dbReference type="InParanoid" id="Q9C167"/>
<dbReference type="OMA" id="SNPFPWM"/>
<dbReference type="OrthoDB" id="10248373at2759"/>
<dbReference type="Proteomes" id="UP000001805">
    <property type="component" value="Chromosome 3, Linkage Group III"/>
</dbReference>
<dbReference type="GO" id="GO:0046872">
    <property type="term" value="F:metal ion binding"/>
    <property type="evidence" value="ECO:0007669"/>
    <property type="project" value="UniProtKB-KW"/>
</dbReference>
<dbReference type="GO" id="GO:0004748">
    <property type="term" value="F:ribonucleoside-diphosphate reductase activity, thioredoxin disulfide as acceptor"/>
    <property type="evidence" value="ECO:0007669"/>
    <property type="project" value="UniProtKB-EC"/>
</dbReference>
<dbReference type="GO" id="GO:0009263">
    <property type="term" value="P:deoxyribonucleotide biosynthetic process"/>
    <property type="evidence" value="ECO:0007669"/>
    <property type="project" value="UniProtKB-KW"/>
</dbReference>
<dbReference type="CDD" id="cd01049">
    <property type="entry name" value="RNRR2"/>
    <property type="match status" value="1"/>
</dbReference>
<dbReference type="FunFam" id="1.10.620.20:FF:000004">
    <property type="entry name" value="Ribonucleoside-diphosphate reductase subunit M2 B"/>
    <property type="match status" value="1"/>
</dbReference>
<dbReference type="Gene3D" id="1.10.620.20">
    <property type="entry name" value="Ribonucleotide Reductase, subunit A"/>
    <property type="match status" value="1"/>
</dbReference>
<dbReference type="InterPro" id="IPR009078">
    <property type="entry name" value="Ferritin-like_SF"/>
</dbReference>
<dbReference type="InterPro" id="IPR012348">
    <property type="entry name" value="RNR-like"/>
</dbReference>
<dbReference type="InterPro" id="IPR033909">
    <property type="entry name" value="RNR_small"/>
</dbReference>
<dbReference type="InterPro" id="IPR030475">
    <property type="entry name" value="RNR_small_AS"/>
</dbReference>
<dbReference type="InterPro" id="IPR000358">
    <property type="entry name" value="RNR_small_fam"/>
</dbReference>
<dbReference type="PANTHER" id="PTHR23409">
    <property type="entry name" value="RIBONUCLEOSIDE-DIPHOSPHATE REDUCTASE SMALL CHAIN"/>
    <property type="match status" value="1"/>
</dbReference>
<dbReference type="PANTHER" id="PTHR23409:SF18">
    <property type="entry name" value="RIBONUCLEOSIDE-DIPHOSPHATE REDUCTASE SUBUNIT M2"/>
    <property type="match status" value="1"/>
</dbReference>
<dbReference type="Pfam" id="PF00268">
    <property type="entry name" value="Ribonuc_red_sm"/>
    <property type="match status" value="1"/>
</dbReference>
<dbReference type="SUPFAM" id="SSF47240">
    <property type="entry name" value="Ferritin-like"/>
    <property type="match status" value="1"/>
</dbReference>
<dbReference type="PROSITE" id="PS00368">
    <property type="entry name" value="RIBORED_SMALL"/>
    <property type="match status" value="1"/>
</dbReference>
<protein>
    <recommendedName>
        <fullName>Ribonucleoside-diphosphate reductase small chain</fullName>
        <ecNumber>1.17.4.1</ecNumber>
    </recommendedName>
    <alternativeName>
        <fullName>Ribonucleotide reductase small subunit</fullName>
    </alternativeName>
</protein>
<organism>
    <name type="scientific">Neurospora crassa (strain ATCC 24698 / 74-OR23-1A / CBS 708.71 / DSM 1257 / FGSC 987)</name>
    <dbReference type="NCBI Taxonomy" id="367110"/>
    <lineage>
        <taxon>Eukaryota</taxon>
        <taxon>Fungi</taxon>
        <taxon>Dikarya</taxon>
        <taxon>Ascomycota</taxon>
        <taxon>Pezizomycotina</taxon>
        <taxon>Sordariomycetes</taxon>
        <taxon>Sordariomycetidae</taxon>
        <taxon>Sordariales</taxon>
        <taxon>Sordariaceae</taxon>
        <taxon>Neurospora</taxon>
    </lineage>
</organism>
<feature type="chain" id="PRO_0000190462" description="Ribonucleoside-diphosphate reductase small chain">
    <location>
        <begin position="1"/>
        <end position="410"/>
    </location>
</feature>
<feature type="region of interest" description="Disordered" evidence="3">
    <location>
        <begin position="1"/>
        <end position="43"/>
    </location>
</feature>
<feature type="region of interest" description="Disordered" evidence="3">
    <location>
        <begin position="55"/>
        <end position="78"/>
    </location>
</feature>
<feature type="compositionally biased region" description="Polar residues" evidence="3">
    <location>
        <begin position="1"/>
        <end position="20"/>
    </location>
</feature>
<feature type="compositionally biased region" description="Basic and acidic residues" evidence="3">
    <location>
        <begin position="23"/>
        <end position="43"/>
    </location>
</feature>
<feature type="compositionally biased region" description="Basic and acidic residues" evidence="3">
    <location>
        <begin position="55"/>
        <end position="65"/>
    </location>
</feature>
<feature type="active site" evidence="2">
    <location>
        <position position="184"/>
    </location>
</feature>
<feature type="binding site" evidence="2">
    <location>
        <position position="146"/>
    </location>
    <ligand>
        <name>Fe cation</name>
        <dbReference type="ChEBI" id="CHEBI:24875"/>
        <label>1</label>
    </ligand>
</feature>
<feature type="binding site" evidence="2">
    <location>
        <position position="177"/>
    </location>
    <ligand>
        <name>Fe cation</name>
        <dbReference type="ChEBI" id="CHEBI:24875"/>
        <label>1</label>
    </ligand>
</feature>
<feature type="binding site" evidence="1">
    <location>
        <position position="177"/>
    </location>
    <ligand>
        <name>Fe cation</name>
        <dbReference type="ChEBI" id="CHEBI:24875"/>
        <label>2</label>
    </ligand>
</feature>
<feature type="binding site" evidence="2">
    <location>
        <position position="180"/>
    </location>
    <ligand>
        <name>Fe cation</name>
        <dbReference type="ChEBI" id="CHEBI:24875"/>
        <label>1</label>
    </ligand>
</feature>
<feature type="binding site" evidence="1">
    <location>
        <position position="240"/>
    </location>
    <ligand>
        <name>Fe cation</name>
        <dbReference type="ChEBI" id="CHEBI:24875"/>
        <label>2</label>
    </ligand>
</feature>
<feature type="binding site" evidence="1">
    <location>
        <position position="274"/>
    </location>
    <ligand>
        <name>Fe cation</name>
        <dbReference type="ChEBI" id="CHEBI:24875"/>
        <label>2</label>
    </ligand>
</feature>
<feature type="binding site" evidence="1">
    <location>
        <position position="277"/>
    </location>
    <ligand>
        <name>Fe cation</name>
        <dbReference type="ChEBI" id="CHEBI:24875"/>
        <label>2</label>
    </ligand>
</feature>
<proteinExistence type="inferred from homology"/>
<accession>Q9C167</accession>
<accession>Q7RVY4</accession>
<reference key="1">
    <citation type="submission" date="2001-02" db="EMBL/GenBank/DDBJ databases">
        <title>Suppressor of un-24 temperature sensitive mutation.</title>
        <authorList>
            <person name="Kotierk M."/>
            <person name="Smith M.L."/>
        </authorList>
    </citation>
    <scope>NUCLEOTIDE SEQUENCE [GENOMIC DNA]</scope>
    <source>
        <strain>FGSC 1131</strain>
    </source>
</reference>
<reference key="2">
    <citation type="journal article" date="2003" name="Nature">
        <title>The genome sequence of the filamentous fungus Neurospora crassa.</title>
        <authorList>
            <person name="Galagan J.E."/>
            <person name="Calvo S.E."/>
            <person name="Borkovich K.A."/>
            <person name="Selker E.U."/>
            <person name="Read N.D."/>
            <person name="Jaffe D.B."/>
            <person name="FitzHugh W."/>
            <person name="Ma L.-J."/>
            <person name="Smirnov S."/>
            <person name="Purcell S."/>
            <person name="Rehman B."/>
            <person name="Elkins T."/>
            <person name="Engels R."/>
            <person name="Wang S."/>
            <person name="Nielsen C.B."/>
            <person name="Butler J."/>
            <person name="Endrizzi M."/>
            <person name="Qui D."/>
            <person name="Ianakiev P."/>
            <person name="Bell-Pedersen D."/>
            <person name="Nelson M.A."/>
            <person name="Werner-Washburne M."/>
            <person name="Selitrennikoff C.P."/>
            <person name="Kinsey J.A."/>
            <person name="Braun E.L."/>
            <person name="Zelter A."/>
            <person name="Schulte U."/>
            <person name="Kothe G.O."/>
            <person name="Jedd G."/>
            <person name="Mewes H.-W."/>
            <person name="Staben C."/>
            <person name="Marcotte E."/>
            <person name="Greenberg D."/>
            <person name="Roy A."/>
            <person name="Foley K."/>
            <person name="Naylor J."/>
            <person name="Stange-Thomann N."/>
            <person name="Barrett R."/>
            <person name="Gnerre S."/>
            <person name="Kamal M."/>
            <person name="Kamvysselis M."/>
            <person name="Mauceli E.W."/>
            <person name="Bielke C."/>
            <person name="Rudd S."/>
            <person name="Frishman D."/>
            <person name="Krystofova S."/>
            <person name="Rasmussen C."/>
            <person name="Metzenberg R.L."/>
            <person name="Perkins D.D."/>
            <person name="Kroken S."/>
            <person name="Cogoni C."/>
            <person name="Macino G."/>
            <person name="Catcheside D.E.A."/>
            <person name="Li W."/>
            <person name="Pratt R.J."/>
            <person name="Osmani S.A."/>
            <person name="DeSouza C.P.C."/>
            <person name="Glass N.L."/>
            <person name="Orbach M.J."/>
            <person name="Berglund J.A."/>
            <person name="Voelker R."/>
            <person name="Yarden O."/>
            <person name="Plamann M."/>
            <person name="Seiler S."/>
            <person name="Dunlap J.C."/>
            <person name="Radford A."/>
            <person name="Aramayo R."/>
            <person name="Natvig D.O."/>
            <person name="Alex L.A."/>
            <person name="Mannhaupt G."/>
            <person name="Ebbole D.J."/>
            <person name="Freitag M."/>
            <person name="Paulsen I."/>
            <person name="Sachs M.S."/>
            <person name="Lander E.S."/>
            <person name="Nusbaum C."/>
            <person name="Birren B.W."/>
        </authorList>
    </citation>
    <scope>NUCLEOTIDE SEQUENCE [LARGE SCALE GENOMIC DNA]</scope>
    <source>
        <strain>ATCC 24698 / 74-OR23-1A / CBS 708.71 / DSM 1257 / FGSC 987</strain>
    </source>
</reference>